<proteinExistence type="evidence at transcript level"/>
<geneLocation type="chloroplast"/>
<dbReference type="EMBL" id="AB086179">
    <property type="protein sequence ID" value="BAC55366.1"/>
    <property type="molecule type" value="Genomic_DNA"/>
</dbReference>
<dbReference type="EMBL" id="AB087455">
    <property type="protein sequence ID" value="BAC55462.1"/>
    <property type="molecule type" value="mRNA"/>
</dbReference>
<dbReference type="RefSeq" id="NP_777430.1">
    <property type="nucleotide sequence ID" value="NC_004543.1"/>
</dbReference>
<dbReference type="SMR" id="Q85C42"/>
<dbReference type="GeneID" id="2553400"/>
<dbReference type="GO" id="GO:0009535">
    <property type="term" value="C:chloroplast thylakoid membrane"/>
    <property type="evidence" value="ECO:0007669"/>
    <property type="project" value="UniProtKB-SubCell"/>
</dbReference>
<dbReference type="GO" id="GO:0009539">
    <property type="term" value="C:photosystem II reaction center"/>
    <property type="evidence" value="ECO:0007669"/>
    <property type="project" value="InterPro"/>
</dbReference>
<dbReference type="GO" id="GO:0009055">
    <property type="term" value="F:electron transfer activity"/>
    <property type="evidence" value="ECO:0007669"/>
    <property type="project" value="UniProtKB-UniRule"/>
</dbReference>
<dbReference type="GO" id="GO:0020037">
    <property type="term" value="F:heme binding"/>
    <property type="evidence" value="ECO:0007669"/>
    <property type="project" value="InterPro"/>
</dbReference>
<dbReference type="GO" id="GO:0005506">
    <property type="term" value="F:iron ion binding"/>
    <property type="evidence" value="ECO:0007669"/>
    <property type="project" value="UniProtKB-UniRule"/>
</dbReference>
<dbReference type="GO" id="GO:0009767">
    <property type="term" value="P:photosynthetic electron transport chain"/>
    <property type="evidence" value="ECO:0007669"/>
    <property type="project" value="InterPro"/>
</dbReference>
<dbReference type="Gene3D" id="1.20.5.860">
    <property type="entry name" value="Photosystem II cytochrome b559, alpha subunit"/>
    <property type="match status" value="1"/>
</dbReference>
<dbReference type="HAMAP" id="MF_00642">
    <property type="entry name" value="PSII_PsbE"/>
    <property type="match status" value="1"/>
</dbReference>
<dbReference type="InterPro" id="IPR006217">
    <property type="entry name" value="PSII_cyt_b559_asu"/>
</dbReference>
<dbReference type="InterPro" id="IPR037025">
    <property type="entry name" value="PSII_cyt_b559_asu_sf"/>
</dbReference>
<dbReference type="InterPro" id="IPR006216">
    <property type="entry name" value="PSII_cyt_b559_CS"/>
</dbReference>
<dbReference type="InterPro" id="IPR013081">
    <property type="entry name" value="PSII_cyt_b559_N"/>
</dbReference>
<dbReference type="InterPro" id="IPR013082">
    <property type="entry name" value="PSII_cytb559_asu_lum"/>
</dbReference>
<dbReference type="NCBIfam" id="TIGR01332">
    <property type="entry name" value="cyt_b559_alpha"/>
    <property type="match status" value="1"/>
</dbReference>
<dbReference type="PANTHER" id="PTHR33391">
    <property type="entry name" value="CYTOCHROME B559 SUBUNIT BETA-RELATED"/>
    <property type="match status" value="1"/>
</dbReference>
<dbReference type="PANTHER" id="PTHR33391:SF9">
    <property type="entry name" value="CYTOCHROME B559 SUBUNIT BETA-RELATED"/>
    <property type="match status" value="1"/>
</dbReference>
<dbReference type="Pfam" id="PF00283">
    <property type="entry name" value="Cytochrom_B559"/>
    <property type="match status" value="1"/>
</dbReference>
<dbReference type="Pfam" id="PF00284">
    <property type="entry name" value="Cytochrom_B559a"/>
    <property type="match status" value="1"/>
</dbReference>
<dbReference type="PIRSF" id="PIRSF000036">
    <property type="entry name" value="PsbE"/>
    <property type="match status" value="1"/>
</dbReference>
<dbReference type="SUPFAM" id="SSF161045">
    <property type="entry name" value="Cytochrome b559 subunits"/>
    <property type="match status" value="1"/>
</dbReference>
<dbReference type="PROSITE" id="PS00537">
    <property type="entry name" value="CYTOCHROME_B559"/>
    <property type="match status" value="1"/>
</dbReference>
<evidence type="ECO:0000255" key="1">
    <source>
        <dbReference type="HAMAP-Rule" id="MF_00642"/>
    </source>
</evidence>
<evidence type="ECO:0000269" key="2">
    <source>
    </source>
</evidence>
<evidence type="ECO:0000269" key="3">
    <source>
    </source>
</evidence>
<organism>
    <name type="scientific">Anthoceros angustus</name>
    <name type="common">Hornwort</name>
    <name type="synonym">Anthoceros formosae</name>
    <dbReference type="NCBI Taxonomy" id="48387"/>
    <lineage>
        <taxon>Eukaryota</taxon>
        <taxon>Viridiplantae</taxon>
        <taxon>Streptophyta</taxon>
        <taxon>Embryophyta</taxon>
        <taxon>Anthocerotophyta</taxon>
        <taxon>Anthocerotopsida</taxon>
        <taxon>Anthocerotidae</taxon>
        <taxon>Anthocerotales</taxon>
        <taxon>Anthocerotaceae</taxon>
        <taxon>Anthoceros</taxon>
    </lineage>
</organism>
<name>PSBE_ANTAG</name>
<reference key="1">
    <citation type="journal article" date="2003" name="Nucleic Acids Res.">
        <title>The complete nucleotide sequence of the hornwort (Anthoceros formosae) chloroplast genome: insight into the earliest land plants.</title>
        <authorList>
            <person name="Kugita M."/>
            <person name="Kaneko A."/>
            <person name="Yamamoto Y."/>
            <person name="Takeya Y."/>
            <person name="Matsumoto T."/>
            <person name="Yoshinaga K."/>
        </authorList>
    </citation>
    <scope>NUCLEOTIDE SEQUENCE [LARGE SCALE GENOMIC DNA]</scope>
    <scope>RNA EDITING</scope>
</reference>
<reference key="2">
    <citation type="journal article" date="2003" name="Nucleic Acids Res.">
        <title>RNA editing in hornwort chloroplasts makes more than half the genes functional.</title>
        <authorList>
            <person name="Kugita M."/>
            <person name="Yamamoto Y."/>
            <person name="Fujikawa T."/>
            <person name="Matsumoto T."/>
            <person name="Yoshinaga K."/>
        </authorList>
    </citation>
    <scope>NUCLEOTIDE SEQUENCE [MRNA]</scope>
    <scope>RNA EDITING</scope>
    <source>
        <tissue>Thallus</tissue>
    </source>
</reference>
<sequence>MSGNTGERPFADIITSIRYWVIHSITIPSLFIAGWLFVSTGLAYDVFGSPRPNEYFTENRQEVPLITGRFNSLEQVDEFTRSF</sequence>
<comment type="function">
    <text evidence="1">This b-type cytochrome is tightly associated with the reaction center of photosystem II (PSII). PSII is a light-driven water:plastoquinone oxidoreductase that uses light energy to abstract electrons from H(2)O, generating O(2) and a proton gradient subsequently used for ATP formation. It consists of a core antenna complex that captures photons, and an electron transfer chain that converts photonic excitation into a charge separation.</text>
</comment>
<comment type="cofactor">
    <cofactor evidence="1">
        <name>heme b</name>
        <dbReference type="ChEBI" id="CHEBI:60344"/>
    </cofactor>
    <text evidence="1">With its partner (PsbF) binds heme. PSII binds additional chlorophylls, carotenoids and specific lipids.</text>
</comment>
<comment type="subunit">
    <text evidence="1">Heterodimer of an alpha subunit and a beta subunit. PSII is composed of 1 copy each of membrane proteins PsbA, PsbB, PsbC, PsbD, PsbE, PsbF, PsbH, PsbI, PsbJ, PsbK, PsbL, PsbM, PsbT, PsbX, PsbY, PsbZ, Psb30/Ycf12, at least 3 peripheral proteins of the oxygen-evolving complex and a large number of cofactors. It forms dimeric complexes.</text>
</comment>
<comment type="subcellular location">
    <subcellularLocation>
        <location evidence="1">Plastid</location>
        <location evidence="1">Chloroplast thylakoid membrane</location>
        <topology evidence="1">Single-pass membrane protein</topology>
    </subcellularLocation>
</comment>
<comment type="RNA editing">
    <location>
        <position position="47" evidence="2 3"/>
    </location>
    <location>
        <position position="60" evidence="2 3"/>
    </location>
    <text>The nonsense codon at position 60 is modified to a sense codon.</text>
</comment>
<comment type="similarity">
    <text evidence="1">Belongs to the PsbE/PsbF family.</text>
</comment>
<gene>
    <name evidence="1" type="primary">psbE</name>
</gene>
<accession>Q85C42</accession>
<feature type="chain" id="PRO_0000200297" description="Cytochrome b559 subunit alpha">
    <location>
        <begin position="1"/>
        <end position="83"/>
    </location>
</feature>
<feature type="transmembrane region" description="Helical" evidence="1">
    <location>
        <begin position="21"/>
        <end position="35"/>
    </location>
</feature>
<feature type="binding site" description="axial binding residue" evidence="1">
    <location>
        <position position="23"/>
    </location>
    <ligand>
        <name>heme</name>
        <dbReference type="ChEBI" id="CHEBI:30413"/>
        <note>ligand shared with beta subunit</note>
    </ligand>
    <ligandPart>
        <name>Fe</name>
        <dbReference type="ChEBI" id="CHEBI:18248"/>
    </ligandPart>
</feature>
<keyword id="KW-0150">Chloroplast</keyword>
<keyword id="KW-0249">Electron transport</keyword>
<keyword id="KW-0349">Heme</keyword>
<keyword id="KW-0408">Iron</keyword>
<keyword id="KW-0472">Membrane</keyword>
<keyword id="KW-0479">Metal-binding</keyword>
<keyword id="KW-0602">Photosynthesis</keyword>
<keyword id="KW-0604">Photosystem II</keyword>
<keyword id="KW-0934">Plastid</keyword>
<keyword id="KW-0691">RNA editing</keyword>
<keyword id="KW-0793">Thylakoid</keyword>
<keyword id="KW-0812">Transmembrane</keyword>
<keyword id="KW-1133">Transmembrane helix</keyword>
<keyword id="KW-0813">Transport</keyword>
<protein>
    <recommendedName>
        <fullName evidence="1">Cytochrome b559 subunit alpha</fullName>
    </recommendedName>
    <alternativeName>
        <fullName evidence="1">PSII reaction center subunit V</fullName>
    </alternativeName>
</protein>